<keyword id="KW-0028">Amino-acid biosynthesis</keyword>
<keyword id="KW-0057">Aromatic amino acid biosynthesis</keyword>
<keyword id="KW-0456">Lyase</keyword>
<keyword id="KW-0822">Tryptophan biosynthesis</keyword>
<accession>Q9PDK3</accession>
<protein>
    <recommendedName>
        <fullName evidence="1">Tryptophan synthase alpha chain</fullName>
        <ecNumber evidence="1">4.2.1.20</ecNumber>
    </recommendedName>
</protein>
<proteinExistence type="inferred from homology"/>
<gene>
    <name evidence="1" type="primary">trpA</name>
    <name type="ordered locus">XF_1376</name>
</gene>
<reference key="1">
    <citation type="journal article" date="2000" name="Nature">
        <title>The genome sequence of the plant pathogen Xylella fastidiosa.</title>
        <authorList>
            <person name="Simpson A.J.G."/>
            <person name="Reinach F.C."/>
            <person name="Arruda P."/>
            <person name="Abreu F.A."/>
            <person name="Acencio M."/>
            <person name="Alvarenga R."/>
            <person name="Alves L.M.C."/>
            <person name="Araya J.E."/>
            <person name="Baia G.S."/>
            <person name="Baptista C.S."/>
            <person name="Barros M.H."/>
            <person name="Bonaccorsi E.D."/>
            <person name="Bordin S."/>
            <person name="Bove J.M."/>
            <person name="Briones M.R.S."/>
            <person name="Bueno M.R.P."/>
            <person name="Camargo A.A."/>
            <person name="Camargo L.E.A."/>
            <person name="Carraro D.M."/>
            <person name="Carrer H."/>
            <person name="Colauto N.B."/>
            <person name="Colombo C."/>
            <person name="Costa F.F."/>
            <person name="Costa M.C.R."/>
            <person name="Costa-Neto C.M."/>
            <person name="Coutinho L.L."/>
            <person name="Cristofani M."/>
            <person name="Dias-Neto E."/>
            <person name="Docena C."/>
            <person name="El-Dorry H."/>
            <person name="Facincani A.P."/>
            <person name="Ferreira A.J.S."/>
            <person name="Ferreira V.C.A."/>
            <person name="Ferro J.A."/>
            <person name="Fraga J.S."/>
            <person name="Franca S.C."/>
            <person name="Franco M.C."/>
            <person name="Frohme M."/>
            <person name="Furlan L.R."/>
            <person name="Garnier M."/>
            <person name="Goldman G.H."/>
            <person name="Goldman M.H.S."/>
            <person name="Gomes S.L."/>
            <person name="Gruber A."/>
            <person name="Ho P.L."/>
            <person name="Hoheisel J.D."/>
            <person name="Junqueira M.L."/>
            <person name="Kemper E.L."/>
            <person name="Kitajima J.P."/>
            <person name="Krieger J.E."/>
            <person name="Kuramae E.E."/>
            <person name="Laigret F."/>
            <person name="Lambais M.R."/>
            <person name="Leite L.C.C."/>
            <person name="Lemos E.G.M."/>
            <person name="Lemos M.V.F."/>
            <person name="Lopes S.A."/>
            <person name="Lopes C.R."/>
            <person name="Machado J.A."/>
            <person name="Machado M.A."/>
            <person name="Madeira A.M.B.N."/>
            <person name="Madeira H.M.F."/>
            <person name="Marino C.L."/>
            <person name="Marques M.V."/>
            <person name="Martins E.A.L."/>
            <person name="Martins E.M.F."/>
            <person name="Matsukuma A.Y."/>
            <person name="Menck C.F.M."/>
            <person name="Miracca E.C."/>
            <person name="Miyaki C.Y."/>
            <person name="Monteiro-Vitorello C.B."/>
            <person name="Moon D.H."/>
            <person name="Nagai M.A."/>
            <person name="Nascimento A.L.T.O."/>
            <person name="Netto L.E.S."/>
            <person name="Nhani A. Jr."/>
            <person name="Nobrega F.G."/>
            <person name="Nunes L.R."/>
            <person name="Oliveira M.A."/>
            <person name="de Oliveira M.C."/>
            <person name="de Oliveira R.C."/>
            <person name="Palmieri D.A."/>
            <person name="Paris A."/>
            <person name="Peixoto B.R."/>
            <person name="Pereira G.A.G."/>
            <person name="Pereira H.A. Jr."/>
            <person name="Pesquero J.B."/>
            <person name="Quaggio R.B."/>
            <person name="Roberto P.G."/>
            <person name="Rodrigues V."/>
            <person name="de Rosa A.J.M."/>
            <person name="de Rosa V.E. Jr."/>
            <person name="de Sa R.G."/>
            <person name="Santelli R.V."/>
            <person name="Sawasaki H.E."/>
            <person name="da Silva A.C.R."/>
            <person name="da Silva A.M."/>
            <person name="da Silva F.R."/>
            <person name="Silva W.A. Jr."/>
            <person name="da Silveira J.F."/>
            <person name="Silvestri M.L.Z."/>
            <person name="Siqueira W.J."/>
            <person name="de Souza A.A."/>
            <person name="de Souza A.P."/>
            <person name="Terenzi M.F."/>
            <person name="Truffi D."/>
            <person name="Tsai S.M."/>
            <person name="Tsuhako M.H."/>
            <person name="Vallada H."/>
            <person name="Van Sluys M.A."/>
            <person name="Verjovski-Almeida S."/>
            <person name="Vettore A.L."/>
            <person name="Zago M.A."/>
            <person name="Zatz M."/>
            <person name="Meidanis J."/>
            <person name="Setubal J.C."/>
        </authorList>
    </citation>
    <scope>NUCLEOTIDE SEQUENCE [LARGE SCALE GENOMIC DNA]</scope>
    <source>
        <strain>9a5c</strain>
    </source>
</reference>
<organism>
    <name type="scientific">Xylella fastidiosa (strain 9a5c)</name>
    <dbReference type="NCBI Taxonomy" id="160492"/>
    <lineage>
        <taxon>Bacteria</taxon>
        <taxon>Pseudomonadati</taxon>
        <taxon>Pseudomonadota</taxon>
        <taxon>Gammaproteobacteria</taxon>
        <taxon>Lysobacterales</taxon>
        <taxon>Lysobacteraceae</taxon>
        <taxon>Xylella</taxon>
    </lineage>
</organism>
<feature type="chain" id="PRO_0000098878" description="Tryptophan synthase alpha chain">
    <location>
        <begin position="1"/>
        <end position="268"/>
    </location>
</feature>
<feature type="active site" description="Proton acceptor" evidence="1">
    <location>
        <position position="49"/>
    </location>
</feature>
<feature type="active site" description="Proton acceptor" evidence="1">
    <location>
        <position position="60"/>
    </location>
</feature>
<comment type="function">
    <text evidence="1">The alpha subunit is responsible for the aldol cleavage of indoleglycerol phosphate to indole and glyceraldehyde 3-phosphate.</text>
</comment>
<comment type="catalytic activity">
    <reaction evidence="1">
        <text>(1S,2R)-1-C-(indol-3-yl)glycerol 3-phosphate + L-serine = D-glyceraldehyde 3-phosphate + L-tryptophan + H2O</text>
        <dbReference type="Rhea" id="RHEA:10532"/>
        <dbReference type="ChEBI" id="CHEBI:15377"/>
        <dbReference type="ChEBI" id="CHEBI:33384"/>
        <dbReference type="ChEBI" id="CHEBI:57912"/>
        <dbReference type="ChEBI" id="CHEBI:58866"/>
        <dbReference type="ChEBI" id="CHEBI:59776"/>
        <dbReference type="EC" id="4.2.1.20"/>
    </reaction>
</comment>
<comment type="pathway">
    <text evidence="1">Amino-acid biosynthesis; L-tryptophan biosynthesis; L-tryptophan from chorismate: step 5/5.</text>
</comment>
<comment type="subunit">
    <text evidence="1">Tetramer of two alpha and two beta chains.</text>
</comment>
<comment type="similarity">
    <text evidence="1">Belongs to the TrpA family.</text>
</comment>
<name>TRPA_XYLFA</name>
<sequence>MHRIDETFRRLRAQSRKALIPFITAGDPSLEAAVPVMHALVRAGADVIELGVPFSDPMADGPVIQHSSERALQRGVGLAYVLQTVDVFRQSDAVTPVVLMGYLNPLEIYGIARFTQHAVACGVDGVLLVDLPPEEADEIRPIFSAAGLALIVLASPTTSASRLARLSGVAQGYLYYVSFSGVTGADRLDAQSAGDRLRGLRAQTQVPVVVGFGIRDAASAAVMAVDADGVVVGSALVTALSDAPDVDTACRRADAFLAPLRQALDAVK</sequence>
<evidence type="ECO:0000255" key="1">
    <source>
        <dbReference type="HAMAP-Rule" id="MF_00131"/>
    </source>
</evidence>
<dbReference type="EC" id="4.2.1.20" evidence="1"/>
<dbReference type="EMBL" id="AE003849">
    <property type="protein sequence ID" value="AAF84185.1"/>
    <property type="molecule type" value="Genomic_DNA"/>
</dbReference>
<dbReference type="PIR" id="D82688">
    <property type="entry name" value="D82688"/>
</dbReference>
<dbReference type="RefSeq" id="WP_010893880.1">
    <property type="nucleotide sequence ID" value="NC_002488.3"/>
</dbReference>
<dbReference type="SMR" id="Q9PDK3"/>
<dbReference type="STRING" id="160492.XF_1376"/>
<dbReference type="KEGG" id="xfa:XF_1376"/>
<dbReference type="eggNOG" id="COG0159">
    <property type="taxonomic scope" value="Bacteria"/>
</dbReference>
<dbReference type="HOGENOM" id="CLU_016734_0_0_6"/>
<dbReference type="UniPathway" id="UPA00035">
    <property type="reaction ID" value="UER00044"/>
</dbReference>
<dbReference type="Proteomes" id="UP000000812">
    <property type="component" value="Chromosome"/>
</dbReference>
<dbReference type="GO" id="GO:0005829">
    <property type="term" value="C:cytosol"/>
    <property type="evidence" value="ECO:0007669"/>
    <property type="project" value="TreeGrafter"/>
</dbReference>
<dbReference type="GO" id="GO:0004834">
    <property type="term" value="F:tryptophan synthase activity"/>
    <property type="evidence" value="ECO:0007669"/>
    <property type="project" value="UniProtKB-UniRule"/>
</dbReference>
<dbReference type="CDD" id="cd04724">
    <property type="entry name" value="Tryptophan_synthase_alpha"/>
    <property type="match status" value="1"/>
</dbReference>
<dbReference type="FunFam" id="3.20.20.70:FF:000037">
    <property type="entry name" value="Tryptophan synthase alpha chain"/>
    <property type="match status" value="1"/>
</dbReference>
<dbReference type="Gene3D" id="3.20.20.70">
    <property type="entry name" value="Aldolase class I"/>
    <property type="match status" value="1"/>
</dbReference>
<dbReference type="HAMAP" id="MF_00131">
    <property type="entry name" value="Trp_synth_alpha"/>
    <property type="match status" value="1"/>
</dbReference>
<dbReference type="InterPro" id="IPR013785">
    <property type="entry name" value="Aldolase_TIM"/>
</dbReference>
<dbReference type="InterPro" id="IPR011060">
    <property type="entry name" value="RibuloseP-bd_barrel"/>
</dbReference>
<dbReference type="InterPro" id="IPR018204">
    <property type="entry name" value="Trp_synthase_alpha_AS"/>
</dbReference>
<dbReference type="InterPro" id="IPR002028">
    <property type="entry name" value="Trp_synthase_suA"/>
</dbReference>
<dbReference type="NCBIfam" id="TIGR00262">
    <property type="entry name" value="trpA"/>
    <property type="match status" value="1"/>
</dbReference>
<dbReference type="PANTHER" id="PTHR43406:SF1">
    <property type="entry name" value="TRYPTOPHAN SYNTHASE ALPHA CHAIN, CHLOROPLASTIC"/>
    <property type="match status" value="1"/>
</dbReference>
<dbReference type="PANTHER" id="PTHR43406">
    <property type="entry name" value="TRYPTOPHAN SYNTHASE, ALPHA CHAIN"/>
    <property type="match status" value="1"/>
</dbReference>
<dbReference type="Pfam" id="PF00290">
    <property type="entry name" value="Trp_syntA"/>
    <property type="match status" value="1"/>
</dbReference>
<dbReference type="SUPFAM" id="SSF51366">
    <property type="entry name" value="Ribulose-phoshate binding barrel"/>
    <property type="match status" value="1"/>
</dbReference>
<dbReference type="PROSITE" id="PS00167">
    <property type="entry name" value="TRP_SYNTHASE_ALPHA"/>
    <property type="match status" value="1"/>
</dbReference>